<keyword id="KW-0963">Cytoplasm</keyword>
<keyword id="KW-0342">GTP-binding</keyword>
<keyword id="KW-0378">Hydrolase</keyword>
<keyword id="KW-0460">Magnesium</keyword>
<keyword id="KW-0479">Metal-binding</keyword>
<keyword id="KW-0547">Nucleotide-binding</keyword>
<keyword id="KW-0630">Potassium</keyword>
<keyword id="KW-0819">tRNA processing</keyword>
<name>MNME_BART1</name>
<proteinExistence type="inferred from homology"/>
<feature type="chain" id="PRO_0000345719" description="tRNA modification GTPase MnmE">
    <location>
        <begin position="1"/>
        <end position="435"/>
    </location>
</feature>
<feature type="domain" description="TrmE-type G">
    <location>
        <begin position="214"/>
        <end position="359"/>
    </location>
</feature>
<feature type="binding site" evidence="1">
    <location>
        <position position="20"/>
    </location>
    <ligand>
        <name>(6S)-5-formyl-5,6,7,8-tetrahydrofolate</name>
        <dbReference type="ChEBI" id="CHEBI:57457"/>
    </ligand>
</feature>
<feature type="binding site" evidence="1">
    <location>
        <position position="77"/>
    </location>
    <ligand>
        <name>(6S)-5-formyl-5,6,7,8-tetrahydrofolate</name>
        <dbReference type="ChEBI" id="CHEBI:57457"/>
    </ligand>
</feature>
<feature type="binding site" evidence="1">
    <location>
        <position position="117"/>
    </location>
    <ligand>
        <name>(6S)-5-formyl-5,6,7,8-tetrahydrofolate</name>
        <dbReference type="ChEBI" id="CHEBI:57457"/>
    </ligand>
</feature>
<feature type="binding site" evidence="1">
    <location>
        <begin position="224"/>
        <end position="229"/>
    </location>
    <ligand>
        <name>GTP</name>
        <dbReference type="ChEBI" id="CHEBI:37565"/>
    </ligand>
</feature>
<feature type="binding site" evidence="1">
    <location>
        <position position="228"/>
    </location>
    <ligand>
        <name>Mg(2+)</name>
        <dbReference type="ChEBI" id="CHEBI:18420"/>
    </ligand>
</feature>
<feature type="binding site" evidence="1">
    <location>
        <begin position="243"/>
        <end position="249"/>
    </location>
    <ligand>
        <name>GTP</name>
        <dbReference type="ChEBI" id="CHEBI:37565"/>
    </ligand>
</feature>
<feature type="binding site" evidence="1">
    <location>
        <position position="249"/>
    </location>
    <ligand>
        <name>Mg(2+)</name>
        <dbReference type="ChEBI" id="CHEBI:18420"/>
    </ligand>
</feature>
<feature type="binding site" evidence="1">
    <location>
        <begin position="268"/>
        <end position="271"/>
    </location>
    <ligand>
        <name>GTP</name>
        <dbReference type="ChEBI" id="CHEBI:37565"/>
    </ligand>
</feature>
<feature type="binding site" evidence="1">
    <location>
        <position position="435"/>
    </location>
    <ligand>
        <name>(6S)-5-formyl-5,6,7,8-tetrahydrofolate</name>
        <dbReference type="ChEBI" id="CHEBI:57457"/>
    </ligand>
</feature>
<accession>A9IZY1</accession>
<reference key="1">
    <citation type="journal article" date="2007" name="Nat. Genet.">
        <title>Genomic analysis of Bartonella identifies type IV secretion systems as host adaptability factors.</title>
        <authorList>
            <person name="Saenz H.L."/>
            <person name="Engel P."/>
            <person name="Stoeckli M.C."/>
            <person name="Lanz C."/>
            <person name="Raddatz G."/>
            <person name="Vayssier-Taussat M."/>
            <person name="Birtles R."/>
            <person name="Schuster S.C."/>
            <person name="Dehio C."/>
        </authorList>
    </citation>
    <scope>NUCLEOTIDE SEQUENCE [LARGE SCALE GENOMIC DNA]</scope>
    <source>
        <strain>CIP 105476 / IBS 506</strain>
    </source>
</reference>
<evidence type="ECO:0000255" key="1">
    <source>
        <dbReference type="HAMAP-Rule" id="MF_00379"/>
    </source>
</evidence>
<comment type="function">
    <text evidence="1">Exhibits a very high intrinsic GTPase hydrolysis rate. Involved in the addition of a carboxymethylaminomethyl (cmnm) group at the wobble position (U34) of certain tRNAs, forming tRNA-cmnm(5)s(2)U34.</text>
</comment>
<comment type="cofactor">
    <cofactor evidence="1">
        <name>K(+)</name>
        <dbReference type="ChEBI" id="CHEBI:29103"/>
    </cofactor>
    <text evidence="1">Binds 1 potassium ion per subunit.</text>
</comment>
<comment type="subunit">
    <text evidence="1">Homodimer. Heterotetramer of two MnmE and two MnmG subunits.</text>
</comment>
<comment type="subcellular location">
    <subcellularLocation>
        <location evidence="1">Cytoplasm</location>
    </subcellularLocation>
</comment>
<comment type="similarity">
    <text evidence="1">Belongs to the TRAFAC class TrmE-Era-EngA-EngB-Septin-like GTPase superfamily. TrmE GTPase family.</text>
</comment>
<protein>
    <recommendedName>
        <fullName evidence="1">tRNA modification GTPase MnmE</fullName>
        <ecNumber evidence="1">3.6.-.-</ecNumber>
    </recommendedName>
</protein>
<organism>
    <name type="scientific">Bartonella tribocorum (strain CIP 105476 / IBS 506)</name>
    <dbReference type="NCBI Taxonomy" id="382640"/>
    <lineage>
        <taxon>Bacteria</taxon>
        <taxon>Pseudomonadati</taxon>
        <taxon>Pseudomonadota</taxon>
        <taxon>Alphaproteobacteria</taxon>
        <taxon>Hyphomicrobiales</taxon>
        <taxon>Bartonellaceae</taxon>
        <taxon>Bartonella</taxon>
    </lineage>
</organism>
<dbReference type="EC" id="3.6.-.-" evidence="1"/>
<dbReference type="EMBL" id="AM260525">
    <property type="protein sequence ID" value="CAK02640.1"/>
    <property type="molecule type" value="Genomic_DNA"/>
</dbReference>
<dbReference type="RefSeq" id="WP_012232633.1">
    <property type="nucleotide sequence ID" value="NC_010161.1"/>
</dbReference>
<dbReference type="SMR" id="A9IZY1"/>
<dbReference type="KEGG" id="btr:BT_2693"/>
<dbReference type="eggNOG" id="COG0486">
    <property type="taxonomic scope" value="Bacteria"/>
</dbReference>
<dbReference type="HOGENOM" id="CLU_019624_3_1_5"/>
<dbReference type="Proteomes" id="UP000001592">
    <property type="component" value="Chromosome"/>
</dbReference>
<dbReference type="GO" id="GO:0005737">
    <property type="term" value="C:cytoplasm"/>
    <property type="evidence" value="ECO:0007669"/>
    <property type="project" value="UniProtKB-SubCell"/>
</dbReference>
<dbReference type="GO" id="GO:0005525">
    <property type="term" value="F:GTP binding"/>
    <property type="evidence" value="ECO:0007669"/>
    <property type="project" value="UniProtKB-UniRule"/>
</dbReference>
<dbReference type="GO" id="GO:0003924">
    <property type="term" value="F:GTPase activity"/>
    <property type="evidence" value="ECO:0007669"/>
    <property type="project" value="UniProtKB-UniRule"/>
</dbReference>
<dbReference type="GO" id="GO:0046872">
    <property type="term" value="F:metal ion binding"/>
    <property type="evidence" value="ECO:0007669"/>
    <property type="project" value="UniProtKB-KW"/>
</dbReference>
<dbReference type="GO" id="GO:0030488">
    <property type="term" value="P:tRNA methylation"/>
    <property type="evidence" value="ECO:0007669"/>
    <property type="project" value="TreeGrafter"/>
</dbReference>
<dbReference type="GO" id="GO:0002098">
    <property type="term" value="P:tRNA wobble uridine modification"/>
    <property type="evidence" value="ECO:0007669"/>
    <property type="project" value="TreeGrafter"/>
</dbReference>
<dbReference type="CDD" id="cd04164">
    <property type="entry name" value="trmE"/>
    <property type="match status" value="1"/>
</dbReference>
<dbReference type="CDD" id="cd14858">
    <property type="entry name" value="TrmE_N"/>
    <property type="match status" value="1"/>
</dbReference>
<dbReference type="FunFam" id="3.30.1360.120:FF:000007">
    <property type="entry name" value="tRNA modification GTPase GTPBP3, mitochondrial"/>
    <property type="match status" value="1"/>
</dbReference>
<dbReference type="Gene3D" id="3.40.50.300">
    <property type="entry name" value="P-loop containing nucleotide triphosphate hydrolases"/>
    <property type="match status" value="1"/>
</dbReference>
<dbReference type="Gene3D" id="3.30.1360.120">
    <property type="entry name" value="Probable tRNA modification gtpase trme, domain 1"/>
    <property type="match status" value="1"/>
</dbReference>
<dbReference type="Gene3D" id="1.20.120.430">
    <property type="entry name" value="tRNA modification GTPase MnmE domain 2"/>
    <property type="match status" value="1"/>
</dbReference>
<dbReference type="HAMAP" id="MF_00379">
    <property type="entry name" value="GTPase_MnmE"/>
    <property type="match status" value="1"/>
</dbReference>
<dbReference type="InterPro" id="IPR031168">
    <property type="entry name" value="G_TrmE"/>
</dbReference>
<dbReference type="InterPro" id="IPR006073">
    <property type="entry name" value="GTP-bd"/>
</dbReference>
<dbReference type="InterPro" id="IPR018948">
    <property type="entry name" value="GTP-bd_TrmE_N"/>
</dbReference>
<dbReference type="InterPro" id="IPR004520">
    <property type="entry name" value="GTPase_MnmE"/>
</dbReference>
<dbReference type="InterPro" id="IPR027368">
    <property type="entry name" value="MnmE_dom2"/>
</dbReference>
<dbReference type="InterPro" id="IPR025867">
    <property type="entry name" value="MnmE_helical"/>
</dbReference>
<dbReference type="InterPro" id="IPR027417">
    <property type="entry name" value="P-loop_NTPase"/>
</dbReference>
<dbReference type="InterPro" id="IPR005225">
    <property type="entry name" value="Small_GTP-bd"/>
</dbReference>
<dbReference type="InterPro" id="IPR027266">
    <property type="entry name" value="TrmE/GcvT_dom1"/>
</dbReference>
<dbReference type="NCBIfam" id="TIGR00450">
    <property type="entry name" value="mnmE_trmE_thdF"/>
    <property type="match status" value="1"/>
</dbReference>
<dbReference type="NCBIfam" id="NF003661">
    <property type="entry name" value="PRK05291.1-3"/>
    <property type="match status" value="1"/>
</dbReference>
<dbReference type="NCBIfam" id="TIGR00231">
    <property type="entry name" value="small_GTP"/>
    <property type="match status" value="1"/>
</dbReference>
<dbReference type="PANTHER" id="PTHR42714">
    <property type="entry name" value="TRNA MODIFICATION GTPASE GTPBP3"/>
    <property type="match status" value="1"/>
</dbReference>
<dbReference type="PANTHER" id="PTHR42714:SF2">
    <property type="entry name" value="TRNA MODIFICATION GTPASE GTPBP3, MITOCHONDRIAL"/>
    <property type="match status" value="1"/>
</dbReference>
<dbReference type="Pfam" id="PF01926">
    <property type="entry name" value="MMR_HSR1"/>
    <property type="match status" value="1"/>
</dbReference>
<dbReference type="Pfam" id="PF12631">
    <property type="entry name" value="MnmE_helical"/>
    <property type="match status" value="1"/>
</dbReference>
<dbReference type="Pfam" id="PF10396">
    <property type="entry name" value="TrmE_N"/>
    <property type="match status" value="1"/>
</dbReference>
<dbReference type="SUPFAM" id="SSF52540">
    <property type="entry name" value="P-loop containing nucleoside triphosphate hydrolases"/>
    <property type="match status" value="1"/>
</dbReference>
<dbReference type="SUPFAM" id="SSF116878">
    <property type="entry name" value="TrmE connector domain"/>
    <property type="match status" value="1"/>
</dbReference>
<dbReference type="PROSITE" id="PS51709">
    <property type="entry name" value="G_TRME"/>
    <property type="match status" value="1"/>
</dbReference>
<sequence>MDTIFAVSSGLLPSGVAVIRLSGPHVVHIVKTLCGCLPKARFMHYGNLIARDGSFLDSALTVFFPAPHSFTGEDCAEFHLHGGKAVVNRFLDELSTFSGCRIAEAGEFSRRAFMEGKLDLVQAEGLADLIEAETESQRRLAVMGTSGHLTTLYRDWRHKLMKVRAFIEAELDFADEEDIPDTISDKIWKDVEDLCTSLREHIREGERASILRDGLKIVIAGAPNSGKSSIMNRLAGRSVAIVTEEAGTTRDALEMRLVLGGLPIFLTDTAGFRKTENKIEQLGIEVAKQHVREADLVILVYDIVNPKQVDLPETSAEIWRVGNKLDLYEKNDPCWSIQFSALTGLNFDCFIKKLESFCHRRASEVGNLVPARKRQLQLLKEAVKEIENSLNYHSLDLSLRAEHLRRASDFLGKITGDIDVEDLLDIIFSEFCVGK</sequence>
<gene>
    <name evidence="1" type="primary">mnmE</name>
    <name evidence="1" type="synonym">trmE</name>
    <name type="ordered locus">BT_2693</name>
</gene>